<name>Y1080_POLNA</name>
<protein>
    <recommendedName>
        <fullName evidence="1">Nucleotide-binding protein Pnap_1080</fullName>
    </recommendedName>
</protein>
<proteinExistence type="inferred from homology"/>
<reference key="1">
    <citation type="journal article" date="2009" name="Environ. Microbiol.">
        <title>The genome of Polaromonas naphthalenivorans strain CJ2, isolated from coal tar-contaminated sediment, reveals physiological and metabolic versatility and evolution through extensive horizontal gene transfer.</title>
        <authorList>
            <person name="Yagi J.M."/>
            <person name="Sims D."/>
            <person name="Brettin T."/>
            <person name="Bruce D."/>
            <person name="Madsen E.L."/>
        </authorList>
    </citation>
    <scope>NUCLEOTIDE SEQUENCE [LARGE SCALE GENOMIC DNA]</scope>
    <source>
        <strain>CJ2</strain>
    </source>
</reference>
<accession>A1VL69</accession>
<dbReference type="EMBL" id="CP000529">
    <property type="protein sequence ID" value="ABM36397.1"/>
    <property type="molecule type" value="Genomic_DNA"/>
</dbReference>
<dbReference type="RefSeq" id="WP_011800491.1">
    <property type="nucleotide sequence ID" value="NC_008781.1"/>
</dbReference>
<dbReference type="SMR" id="A1VL69"/>
<dbReference type="STRING" id="365044.Pnap_1080"/>
<dbReference type="KEGG" id="pna:Pnap_1080"/>
<dbReference type="eggNOG" id="COG1666">
    <property type="taxonomic scope" value="Bacteria"/>
</dbReference>
<dbReference type="HOGENOM" id="CLU_099839_1_0_4"/>
<dbReference type="OrthoDB" id="9801447at2"/>
<dbReference type="Proteomes" id="UP000000644">
    <property type="component" value="Chromosome"/>
</dbReference>
<dbReference type="GO" id="GO:0005829">
    <property type="term" value="C:cytosol"/>
    <property type="evidence" value="ECO:0007669"/>
    <property type="project" value="TreeGrafter"/>
</dbReference>
<dbReference type="GO" id="GO:0000166">
    <property type="term" value="F:nucleotide binding"/>
    <property type="evidence" value="ECO:0007669"/>
    <property type="project" value="TreeGrafter"/>
</dbReference>
<dbReference type="CDD" id="cd11740">
    <property type="entry name" value="YajQ_like"/>
    <property type="match status" value="1"/>
</dbReference>
<dbReference type="Gene3D" id="3.30.70.990">
    <property type="entry name" value="YajQ-like, domain 2"/>
    <property type="match status" value="1"/>
</dbReference>
<dbReference type="HAMAP" id="MF_00632">
    <property type="entry name" value="YajQ"/>
    <property type="match status" value="1"/>
</dbReference>
<dbReference type="InterPro" id="IPR007551">
    <property type="entry name" value="DUF520"/>
</dbReference>
<dbReference type="InterPro" id="IPR035570">
    <property type="entry name" value="UPF0234_N"/>
</dbReference>
<dbReference type="InterPro" id="IPR036183">
    <property type="entry name" value="YajQ-like_sf"/>
</dbReference>
<dbReference type="NCBIfam" id="NF003819">
    <property type="entry name" value="PRK05412.1"/>
    <property type="match status" value="1"/>
</dbReference>
<dbReference type="PANTHER" id="PTHR30476">
    <property type="entry name" value="UPF0234 PROTEIN YAJQ"/>
    <property type="match status" value="1"/>
</dbReference>
<dbReference type="PANTHER" id="PTHR30476:SF0">
    <property type="entry name" value="UPF0234 PROTEIN YAJQ"/>
    <property type="match status" value="1"/>
</dbReference>
<dbReference type="Pfam" id="PF04461">
    <property type="entry name" value="DUF520"/>
    <property type="match status" value="1"/>
</dbReference>
<dbReference type="SUPFAM" id="SSF89963">
    <property type="entry name" value="YajQ-like"/>
    <property type="match status" value="2"/>
</dbReference>
<organism>
    <name type="scientific">Polaromonas naphthalenivorans (strain CJ2)</name>
    <dbReference type="NCBI Taxonomy" id="365044"/>
    <lineage>
        <taxon>Bacteria</taxon>
        <taxon>Pseudomonadati</taxon>
        <taxon>Pseudomonadota</taxon>
        <taxon>Betaproteobacteria</taxon>
        <taxon>Burkholderiales</taxon>
        <taxon>Comamonadaceae</taxon>
        <taxon>Polaromonas</taxon>
    </lineage>
</organism>
<gene>
    <name type="ordered locus">Pnap_1080</name>
</gene>
<sequence>MPSFDTVLETDLVKVKNAVENTAKEIGTRFDFKGTAASAELKEKDKEIILIGDGDFQIEQIHDILRNKLTKAGVDVRFLDIGKVEKIGGDKVKQITKVRDGIETEEAKKIQQLIKGNKMKVQAAIQEGKVRVTGAKRDDLQAAMALIRAEIKDLPLSFDNFRD</sequence>
<feature type="chain" id="PRO_1000051748" description="Nucleotide-binding protein Pnap_1080">
    <location>
        <begin position="1"/>
        <end position="163"/>
    </location>
</feature>
<comment type="function">
    <text evidence="1">Nucleotide-binding protein.</text>
</comment>
<comment type="similarity">
    <text evidence="1">Belongs to the YajQ family.</text>
</comment>
<evidence type="ECO:0000255" key="1">
    <source>
        <dbReference type="HAMAP-Rule" id="MF_00632"/>
    </source>
</evidence>
<keyword id="KW-0547">Nucleotide-binding</keyword>
<keyword id="KW-1185">Reference proteome</keyword>